<name>TPX2B_XENLA</name>
<comment type="function">
    <text evidence="1">Spindle assembly factor. Required for normal assembly of mitotic spindles. Mediates the binding kif15 and aurka to spindle microtubules. Required for targeting kif15 to microtubule minus ends. Activates aurka by promoting its autophosphorylation and protects the phosphorylated residue against dephosphorylation (By similarity).</text>
</comment>
<comment type="subunit">
    <text evidence="1">Associates with microtubules. Interacts with aurka and plk1. Interacts with kif15 (By similarity).</text>
</comment>
<comment type="subcellular location">
    <subcellularLocation>
        <location evidence="1">Nucleus</location>
    </subcellularLocation>
    <subcellularLocation>
        <location evidence="1">Cytoplasm</location>
        <location evidence="1">Cytoskeleton</location>
        <location evidence="1">Spindle</location>
    </subcellularLocation>
    <subcellularLocation>
        <location evidence="1">Cytoplasm</location>
        <location evidence="1">Cytoskeleton</location>
        <location evidence="1">Spindle pole</location>
    </subcellularLocation>
    <text evidence="1">Localizes during metaphase on spindle microtubules, with a strong enrichment at spindle poles. Localizes to the minus ends of spindle pole and aster microtubules in a dynein- and dynactin-dependent manner (By similarity).</text>
</comment>
<comment type="PTM">
    <text evidence="1">Phosphorylated during mitosis. Hyperphosphorylated upon assembly of microtubules (By similarity).</text>
</comment>
<comment type="similarity">
    <text evidence="3">Belongs to the TPX2 family.</text>
</comment>
<proteinExistence type="evidence at transcript level"/>
<reference key="1">
    <citation type="submission" date="2004-07" db="EMBL/GenBank/DDBJ databases">
        <authorList>
            <consortium name="NIH - Xenopus Gene Collection (XGC) project"/>
        </authorList>
    </citation>
    <scope>NUCLEOTIDE SEQUENCE [LARGE SCALE MRNA]</scope>
    <source>
        <tissue>Gastrula</tissue>
    </source>
</reference>
<dbReference type="EMBL" id="BC077396">
    <property type="protein sequence ID" value="AAH77396.1"/>
    <property type="molecule type" value="mRNA"/>
</dbReference>
<dbReference type="SMR" id="Q6DDV8"/>
<dbReference type="DNASU" id="446586"/>
<dbReference type="GeneID" id="446586"/>
<dbReference type="KEGG" id="xla:446586"/>
<dbReference type="AGR" id="Xenbase:XB-GENE-6255926"/>
<dbReference type="CTD" id="446586"/>
<dbReference type="Xenbase" id="XB-GENE-6255926">
    <property type="gene designation" value="tpx2.S"/>
</dbReference>
<dbReference type="OrthoDB" id="1684416at2759"/>
<dbReference type="Proteomes" id="UP000186698">
    <property type="component" value="Chromosome 9_10S"/>
</dbReference>
<dbReference type="Bgee" id="446586">
    <property type="expression patterns" value="Expressed in blastula and 19 other cell types or tissues"/>
</dbReference>
<dbReference type="GO" id="GO:0005737">
    <property type="term" value="C:cytoplasm"/>
    <property type="evidence" value="ECO:0007669"/>
    <property type="project" value="UniProtKB-KW"/>
</dbReference>
<dbReference type="GO" id="GO:0005874">
    <property type="term" value="C:microtubule"/>
    <property type="evidence" value="ECO:0007669"/>
    <property type="project" value="UniProtKB-KW"/>
</dbReference>
<dbReference type="GO" id="GO:0005634">
    <property type="term" value="C:nucleus"/>
    <property type="evidence" value="ECO:0007669"/>
    <property type="project" value="UniProtKB-SubCell"/>
</dbReference>
<dbReference type="GO" id="GO:0000922">
    <property type="term" value="C:spindle pole"/>
    <property type="evidence" value="ECO:0007669"/>
    <property type="project" value="UniProtKB-SubCell"/>
</dbReference>
<dbReference type="GO" id="GO:0051301">
    <property type="term" value="P:cell division"/>
    <property type="evidence" value="ECO:0007669"/>
    <property type="project" value="UniProtKB-KW"/>
</dbReference>
<dbReference type="GO" id="GO:0060236">
    <property type="term" value="P:regulation of mitotic spindle organization"/>
    <property type="evidence" value="ECO:0007669"/>
    <property type="project" value="InterPro"/>
</dbReference>
<dbReference type="InterPro" id="IPR015128">
    <property type="entry name" value="Aurora-A-bd"/>
</dbReference>
<dbReference type="InterPro" id="IPR027329">
    <property type="entry name" value="TPX2_C"/>
</dbReference>
<dbReference type="InterPro" id="IPR027330">
    <property type="entry name" value="TPX2_central_dom"/>
</dbReference>
<dbReference type="InterPro" id="IPR009675">
    <property type="entry name" value="TPX2_fam"/>
</dbReference>
<dbReference type="PANTHER" id="PTHR14326">
    <property type="entry name" value="TARGETING PROTEIN FOR XKLP2"/>
    <property type="match status" value="1"/>
</dbReference>
<dbReference type="PANTHER" id="PTHR14326:SF44">
    <property type="entry name" value="TARGETING PROTEIN FOR XKLP2"/>
    <property type="match status" value="1"/>
</dbReference>
<dbReference type="Pfam" id="PF09041">
    <property type="entry name" value="Aurora-A_bind"/>
    <property type="match status" value="1"/>
</dbReference>
<dbReference type="Pfam" id="PF06886">
    <property type="entry name" value="TPX2"/>
    <property type="match status" value="2"/>
</dbReference>
<dbReference type="Pfam" id="PF12214">
    <property type="entry name" value="TPX2_importin"/>
    <property type="match status" value="1"/>
</dbReference>
<accession>Q6DDV8</accession>
<feature type="chain" id="PRO_0000393115" description="Targeting protein for Xklp2-B">
    <location>
        <begin position="1"/>
        <end position="715"/>
    </location>
</feature>
<feature type="region of interest" description="Disordered" evidence="2">
    <location>
        <begin position="36"/>
        <end position="167"/>
    </location>
</feature>
<feature type="region of interest" description="Disordered" evidence="2">
    <location>
        <begin position="260"/>
        <end position="291"/>
    </location>
</feature>
<feature type="region of interest" description="Disordered" evidence="2">
    <location>
        <begin position="314"/>
        <end position="337"/>
    </location>
</feature>
<feature type="compositionally biased region" description="Polar residues" evidence="2">
    <location>
        <begin position="47"/>
        <end position="56"/>
    </location>
</feature>
<feature type="compositionally biased region" description="Basic residues" evidence="2">
    <location>
        <begin position="85"/>
        <end position="103"/>
    </location>
</feature>
<feature type="compositionally biased region" description="Basic and acidic residues" evidence="2">
    <location>
        <begin position="104"/>
        <end position="115"/>
    </location>
</feature>
<feature type="compositionally biased region" description="Polar residues" evidence="2">
    <location>
        <begin position="141"/>
        <end position="152"/>
    </location>
</feature>
<feature type="modified residue" description="Phosphoserine; by plk1" evidence="1">
    <location>
        <position position="204"/>
    </location>
</feature>
<keyword id="KW-0131">Cell cycle</keyword>
<keyword id="KW-0132">Cell division</keyword>
<keyword id="KW-0963">Cytoplasm</keyword>
<keyword id="KW-0206">Cytoskeleton</keyword>
<keyword id="KW-0493">Microtubule</keyword>
<keyword id="KW-0498">Mitosis</keyword>
<keyword id="KW-0539">Nucleus</keyword>
<keyword id="KW-0597">Phosphoprotein</keyword>
<keyword id="KW-1185">Reference proteome</keyword>
<organism>
    <name type="scientific">Xenopus laevis</name>
    <name type="common">African clawed frog</name>
    <dbReference type="NCBI Taxonomy" id="8355"/>
    <lineage>
        <taxon>Eukaryota</taxon>
        <taxon>Metazoa</taxon>
        <taxon>Chordata</taxon>
        <taxon>Craniata</taxon>
        <taxon>Vertebrata</taxon>
        <taxon>Euteleostomi</taxon>
        <taxon>Amphibia</taxon>
        <taxon>Batrachia</taxon>
        <taxon>Anura</taxon>
        <taxon>Pipoidea</taxon>
        <taxon>Pipidae</taxon>
        <taxon>Xenopodinae</taxon>
        <taxon>Xenopus</taxon>
        <taxon>Xenopus</taxon>
    </lineage>
</organism>
<sequence length="715" mass="82010">MADAQDTYSYDAPSIFNFSSFHDDHNADSWFDQLTNAENIPPDQKPLSETSVNAEQNCKVEPGKITPSKEEVSKSTTHVCDVKSQTKRSARRMSKKHRQKILLKMKETHLEKETAQSEYPPCKKLKGSSTKDRQAPVIRGQPTSSHHGTTSPKPKAQLTMPATPTVLKRRNILAKSKSSEEQELEKMQALQKEMLENLKKNEHSMKVAISGAGQPVKNFIPVTKPVDFHFKTDDRLKRNANPPEGDGYKEVDFASVLRKPPTSPVQVTKGGHTVPKPFNLSKGKRKHEEASDFVSTAEQVVAFYRRTPARYHLRSRQKEMEGPSPVKMLKPKLTNPKTPLLQTKQRHRPTTCKSAAELEAEELDMIHQYKFKAQELDTRILEGGPVLPKKPSVKEPTKAIGFDLEIEKRIQQREKKDEVEEEAFSFHSRPCPSKILADVVGVPQKKLLPVTVPQSPAFALKNRVRIPAQEEKEEEVPVIKATRMPHYGVPFKPKLVEQKQVEACPFSFCERDKERQLQKEKRLDELRKEEVPKFKAQRLPQFDHISLPEKKVKMPTQQEPFQLEIDKRGATKLQRWQHQIKEELKQQKEMVVFKARPNTVVHQEPFVPKKESRSLTDSLSGSMIQEGFELATAKRAKERQEFEKCLAEMEAQKSLLEEETRKQREEEEREEINQLRQELVHKAQPIRKFKAVEVKASDVPLTVPASPNFSDRFKC</sequence>
<evidence type="ECO:0000250" key="1"/>
<evidence type="ECO:0000256" key="2">
    <source>
        <dbReference type="SAM" id="MobiDB-lite"/>
    </source>
</evidence>
<evidence type="ECO:0000305" key="3"/>
<protein>
    <recommendedName>
        <fullName>Targeting protein for Xklp2-B</fullName>
    </recommendedName>
</protein>
<gene>
    <name type="primary">tpx2-b</name>
</gene>